<protein>
    <recommendedName>
        <fullName>FKBP-type 16 kDa peptidyl-prolyl cis-trans isomerase</fullName>
        <shortName>PPIase</shortName>
        <ecNumber>5.2.1.8</ecNumber>
    </recommendedName>
    <alternativeName>
        <fullName>Rotamase</fullName>
    </alternativeName>
</protein>
<comment type="function">
    <text evidence="1">PPIases accelerate the folding of proteins. Substrate specificity carried out with 'Suc-Ala-Xaa-Pro-Phe-4-nitroanilide', where Xaa is the amino acid tested, was found to be Phe &gt; Leu &gt;&gt; Ile &gt; Lys = Ala &gt; Trp &gt; His &gt;&gt; Gln (By similarity).</text>
</comment>
<comment type="catalytic activity">
    <reaction>
        <text>[protein]-peptidylproline (omega=180) = [protein]-peptidylproline (omega=0)</text>
        <dbReference type="Rhea" id="RHEA:16237"/>
        <dbReference type="Rhea" id="RHEA-COMP:10747"/>
        <dbReference type="Rhea" id="RHEA-COMP:10748"/>
        <dbReference type="ChEBI" id="CHEBI:83833"/>
        <dbReference type="ChEBI" id="CHEBI:83834"/>
        <dbReference type="EC" id="5.2.1.8"/>
    </reaction>
</comment>
<comment type="similarity">
    <text evidence="3">Belongs to the FKBP-type PPIase family.</text>
</comment>
<dbReference type="EC" id="5.2.1.8"/>
<dbReference type="EMBL" id="AE005674">
    <property type="protein sequence ID" value="AAN41690.1"/>
    <property type="molecule type" value="Genomic_DNA"/>
</dbReference>
<dbReference type="EMBL" id="AE005674">
    <property type="protein sequence ID" value="AAN41691.1"/>
    <property type="molecule type" value="Genomic_DNA"/>
</dbReference>
<dbReference type="EMBL" id="AE014073">
    <property type="protein sequence ID" value="AAP15572.1"/>
    <property type="molecule type" value="Genomic_DNA"/>
</dbReference>
<dbReference type="RefSeq" id="NP_705983.1">
    <property type="nucleotide sequence ID" value="NC_004337.2"/>
</dbReference>
<dbReference type="RefSeq" id="NP_705984.1">
    <property type="nucleotide sequence ID" value="NC_004337.2"/>
</dbReference>
<dbReference type="RefSeq" id="WP_000004655.1">
    <property type="nucleotide sequence ID" value="NZ_WPGW01000005.1"/>
</dbReference>
<dbReference type="BMRB" id="P0AEM3"/>
<dbReference type="SMR" id="P0AEM3"/>
<dbReference type="STRING" id="198214.SF0024"/>
<dbReference type="PaxDb" id="198214-SF0024"/>
<dbReference type="GeneID" id="1024588"/>
<dbReference type="GeneID" id="1025951"/>
<dbReference type="GeneID" id="93777408"/>
<dbReference type="KEGG" id="sfl:SF0024"/>
<dbReference type="KEGG" id="sfl:SF0025"/>
<dbReference type="KEGG" id="sfx:S0027"/>
<dbReference type="PATRIC" id="fig|198214.7.peg.27"/>
<dbReference type="HOGENOM" id="CLU_098197_3_0_6"/>
<dbReference type="Proteomes" id="UP000001006">
    <property type="component" value="Chromosome"/>
</dbReference>
<dbReference type="Proteomes" id="UP000002673">
    <property type="component" value="Chromosome"/>
</dbReference>
<dbReference type="GO" id="GO:0003755">
    <property type="term" value="F:peptidyl-prolyl cis-trans isomerase activity"/>
    <property type="evidence" value="ECO:0007669"/>
    <property type="project" value="UniProtKB-KW"/>
</dbReference>
<dbReference type="GO" id="GO:0006457">
    <property type="term" value="P:protein folding"/>
    <property type="evidence" value="ECO:0007669"/>
    <property type="project" value="UniProtKB-ARBA"/>
</dbReference>
<dbReference type="FunFam" id="2.40.10.330:FF:000002">
    <property type="entry name" value="Peptidyl-prolyl cis-trans isomerase"/>
    <property type="match status" value="1"/>
</dbReference>
<dbReference type="Gene3D" id="2.40.10.330">
    <property type="match status" value="1"/>
</dbReference>
<dbReference type="Gene3D" id="3.10.50.40">
    <property type="match status" value="1"/>
</dbReference>
<dbReference type="InterPro" id="IPR046357">
    <property type="entry name" value="PPIase_dom_sf"/>
</dbReference>
<dbReference type="InterPro" id="IPR001179">
    <property type="entry name" value="PPIase_FKBP_dom"/>
</dbReference>
<dbReference type="InterPro" id="IPR048261">
    <property type="entry name" value="SlpA/SlyD-like_ins_sf"/>
</dbReference>
<dbReference type="NCBIfam" id="NF011676">
    <property type="entry name" value="PRK15095.1"/>
    <property type="match status" value="1"/>
</dbReference>
<dbReference type="PANTHER" id="PTHR47861:SF4">
    <property type="entry name" value="FKBP-TYPE 16 KDA PEPTIDYL-PROLYL CIS-TRANS ISOMERASE"/>
    <property type="match status" value="1"/>
</dbReference>
<dbReference type="PANTHER" id="PTHR47861">
    <property type="entry name" value="FKBP-TYPE PEPTIDYL-PROLYL CIS-TRANS ISOMERASE SLYD"/>
    <property type="match status" value="1"/>
</dbReference>
<dbReference type="Pfam" id="PF00254">
    <property type="entry name" value="FKBP_C"/>
    <property type="match status" value="1"/>
</dbReference>
<dbReference type="SUPFAM" id="SSF54534">
    <property type="entry name" value="FKBP-like"/>
    <property type="match status" value="1"/>
</dbReference>
<dbReference type="PROSITE" id="PS50059">
    <property type="entry name" value="FKBP_PPIASE"/>
    <property type="match status" value="1"/>
</dbReference>
<proteinExistence type="inferred from homology"/>
<keyword id="KW-0413">Isomerase</keyword>
<keyword id="KW-1185">Reference proteome</keyword>
<keyword id="KW-0697">Rotamase</keyword>
<accession>P0AEM3</accession>
<accession>P22563</accession>
<name>FKBX_SHIFL</name>
<gene>
    <name type="primary">fkpB</name>
    <name type="synonym">slpA</name>
    <name type="ordered locus">SF0024</name>
    <name type="ordered locus">S0027</name>
</gene>
<gene>
    <name type="primary">fkbP2</name>
    <name type="synonym">slpA</name>
    <name type="ordered locus">SF0025</name>
</gene>
<sequence>MSESVQSNSAVLVHFTLKLDDGTTAESTRNNGKPALFRLGDASLSEGLEQHLLGLKVGDKTTFSLEPDAAFGVPSPDLIQYFSRREFMDAGEPEIGAIMLFTAMDGSEMPGVIREINGDSITVDFNHPLAGQTVHFDIEVLEIDPALEA</sequence>
<feature type="initiator methionine" description="Removed" evidence="1">
    <location>
        <position position="1"/>
    </location>
</feature>
<feature type="chain" id="PRO_0000075372" description="FKBP-type 16 kDa peptidyl-prolyl cis-trans isomerase">
    <location>
        <begin position="2"/>
        <end position="149"/>
    </location>
</feature>
<feature type="domain" description="PPIase FKBP-type" evidence="2">
    <location>
        <begin position="2"/>
        <end position="72"/>
    </location>
</feature>
<evidence type="ECO:0000250" key="1"/>
<evidence type="ECO:0000255" key="2">
    <source>
        <dbReference type="PROSITE-ProRule" id="PRU00277"/>
    </source>
</evidence>
<evidence type="ECO:0000305" key="3"/>
<organism>
    <name type="scientific">Shigella flexneri</name>
    <dbReference type="NCBI Taxonomy" id="623"/>
    <lineage>
        <taxon>Bacteria</taxon>
        <taxon>Pseudomonadati</taxon>
        <taxon>Pseudomonadota</taxon>
        <taxon>Gammaproteobacteria</taxon>
        <taxon>Enterobacterales</taxon>
        <taxon>Enterobacteriaceae</taxon>
        <taxon>Shigella</taxon>
    </lineage>
</organism>
<reference key="1">
    <citation type="journal article" date="2002" name="Nucleic Acids Res.">
        <title>Genome sequence of Shigella flexneri 2a: insights into pathogenicity through comparison with genomes of Escherichia coli K12 and O157.</title>
        <authorList>
            <person name="Jin Q."/>
            <person name="Yuan Z."/>
            <person name="Xu J."/>
            <person name="Wang Y."/>
            <person name="Shen Y."/>
            <person name="Lu W."/>
            <person name="Wang J."/>
            <person name="Liu H."/>
            <person name="Yang J."/>
            <person name="Yang F."/>
            <person name="Zhang X."/>
            <person name="Zhang J."/>
            <person name="Yang G."/>
            <person name="Wu H."/>
            <person name="Qu D."/>
            <person name="Dong J."/>
            <person name="Sun L."/>
            <person name="Xue Y."/>
            <person name="Zhao A."/>
            <person name="Gao Y."/>
            <person name="Zhu J."/>
            <person name="Kan B."/>
            <person name="Ding K."/>
            <person name="Chen S."/>
            <person name="Cheng H."/>
            <person name="Yao Z."/>
            <person name="He B."/>
            <person name="Chen R."/>
            <person name="Ma D."/>
            <person name="Qiang B."/>
            <person name="Wen Y."/>
            <person name="Hou Y."/>
            <person name="Yu J."/>
        </authorList>
    </citation>
    <scope>NUCLEOTIDE SEQUENCE [LARGE SCALE GENOMIC DNA]</scope>
    <source>
        <strain>301 / Serotype 2a</strain>
    </source>
</reference>
<reference key="2">
    <citation type="journal article" date="2003" name="Infect. Immun.">
        <title>Complete genome sequence and comparative genomics of Shigella flexneri serotype 2a strain 2457T.</title>
        <authorList>
            <person name="Wei J."/>
            <person name="Goldberg M.B."/>
            <person name="Burland V."/>
            <person name="Venkatesan M.M."/>
            <person name="Deng W."/>
            <person name="Fournier G."/>
            <person name="Mayhew G.F."/>
            <person name="Plunkett G. III"/>
            <person name="Rose D.J."/>
            <person name="Darling A."/>
            <person name="Mau B."/>
            <person name="Perna N.T."/>
            <person name="Payne S.M."/>
            <person name="Runyen-Janecky L.J."/>
            <person name="Zhou S."/>
            <person name="Schwartz D.C."/>
            <person name="Blattner F.R."/>
        </authorList>
    </citation>
    <scope>NUCLEOTIDE SEQUENCE [LARGE SCALE GENOMIC DNA]</scope>
    <source>
        <strain>ATCC 700930 / 2457T / Serotype 2a</strain>
    </source>
</reference>